<sequence>MNKTEFIAFMTDHGHNHKHASHKTLTKAEAEKALNLVLDSVISAIKSHHNINITGFGSFEIHHRKAREGRNPKTGAKMKIDAYNQPTFRAGRKMKEACN</sequence>
<accession>Q92J57</accession>
<comment type="function">
    <text evidence="1">Histone-like DNA-binding protein which is capable of wrapping DNA to stabilize it, and thus to prevent its denaturation under extreme environmental conditions.</text>
</comment>
<comment type="subunit">
    <text evidence="1">Homodimer.</text>
</comment>
<comment type="similarity">
    <text evidence="3">Belongs to the bacterial histone-like protein family.</text>
</comment>
<comment type="sequence caution" evidence="3">
    <conflict type="erroneous initiation">
        <sequence resource="EMBL-CDS" id="AAL02750"/>
    </conflict>
</comment>
<gene>
    <name type="primary">hup</name>
    <name type="synonym">hupA</name>
    <name type="ordered locus">RC0212</name>
</gene>
<evidence type="ECO:0000250" key="1"/>
<evidence type="ECO:0000256" key="2">
    <source>
        <dbReference type="SAM" id="MobiDB-lite"/>
    </source>
</evidence>
<evidence type="ECO:0000305" key="3"/>
<reference key="1">
    <citation type="journal article" date="2001" name="Science">
        <title>Mechanisms of evolution in Rickettsia conorii and R. prowazekii.</title>
        <authorList>
            <person name="Ogata H."/>
            <person name="Audic S."/>
            <person name="Renesto-Audiffren P."/>
            <person name="Fournier P.-E."/>
            <person name="Barbe V."/>
            <person name="Samson D."/>
            <person name="Roux V."/>
            <person name="Cossart P."/>
            <person name="Weissenbach J."/>
            <person name="Claverie J.-M."/>
            <person name="Raoult D."/>
        </authorList>
    </citation>
    <scope>NUCLEOTIDE SEQUENCE [LARGE SCALE GENOMIC DNA]</scope>
    <source>
        <strain>ATCC VR-613 / Malish 7</strain>
    </source>
</reference>
<name>DBH_RICCN</name>
<feature type="chain" id="PRO_0000104963" description="DNA-binding protein HU">
    <location>
        <begin position="1"/>
        <end position="99"/>
    </location>
</feature>
<feature type="region of interest" description="Disordered" evidence="2">
    <location>
        <begin position="67"/>
        <end position="86"/>
    </location>
</feature>
<protein>
    <recommendedName>
        <fullName>DNA-binding protein HU</fullName>
    </recommendedName>
</protein>
<proteinExistence type="inferred from homology"/>
<dbReference type="EMBL" id="AE006914">
    <property type="protein sequence ID" value="AAL02750.1"/>
    <property type="status" value="ALT_INIT"/>
    <property type="molecule type" value="Genomic_DNA"/>
</dbReference>
<dbReference type="PIR" id="D97726">
    <property type="entry name" value="D97726"/>
</dbReference>
<dbReference type="SMR" id="Q92J57"/>
<dbReference type="KEGG" id="rco:RC0212"/>
<dbReference type="HOGENOM" id="CLU_105066_3_2_5"/>
<dbReference type="Proteomes" id="UP000000816">
    <property type="component" value="Chromosome"/>
</dbReference>
<dbReference type="GO" id="GO:0003677">
    <property type="term" value="F:DNA binding"/>
    <property type="evidence" value="ECO:0007669"/>
    <property type="project" value="UniProtKB-KW"/>
</dbReference>
<dbReference type="GO" id="GO:0030527">
    <property type="term" value="F:structural constituent of chromatin"/>
    <property type="evidence" value="ECO:0007669"/>
    <property type="project" value="InterPro"/>
</dbReference>
<dbReference type="GO" id="GO:0030261">
    <property type="term" value="P:chromosome condensation"/>
    <property type="evidence" value="ECO:0007669"/>
    <property type="project" value="UniProtKB-KW"/>
</dbReference>
<dbReference type="CDD" id="cd13831">
    <property type="entry name" value="HU"/>
    <property type="match status" value="1"/>
</dbReference>
<dbReference type="Gene3D" id="4.10.520.10">
    <property type="entry name" value="IHF-like DNA-binding proteins"/>
    <property type="match status" value="1"/>
</dbReference>
<dbReference type="InterPro" id="IPR000119">
    <property type="entry name" value="Hist_DNA-bd"/>
</dbReference>
<dbReference type="InterPro" id="IPR020816">
    <property type="entry name" value="Histone-like_DNA-bd_CS"/>
</dbReference>
<dbReference type="InterPro" id="IPR010992">
    <property type="entry name" value="IHF-like_DNA-bd_dom_sf"/>
</dbReference>
<dbReference type="PANTHER" id="PTHR33175">
    <property type="entry name" value="DNA-BINDING PROTEIN HU"/>
    <property type="match status" value="1"/>
</dbReference>
<dbReference type="PANTHER" id="PTHR33175:SF3">
    <property type="entry name" value="DNA-BINDING PROTEIN HU-BETA"/>
    <property type="match status" value="1"/>
</dbReference>
<dbReference type="Pfam" id="PF00216">
    <property type="entry name" value="Bac_DNA_binding"/>
    <property type="match status" value="1"/>
</dbReference>
<dbReference type="PRINTS" id="PR01727">
    <property type="entry name" value="DNABINDINGHU"/>
</dbReference>
<dbReference type="SMART" id="SM00411">
    <property type="entry name" value="BHL"/>
    <property type="match status" value="1"/>
</dbReference>
<dbReference type="SUPFAM" id="SSF47729">
    <property type="entry name" value="IHF-like DNA-binding proteins"/>
    <property type="match status" value="1"/>
</dbReference>
<dbReference type="PROSITE" id="PS00045">
    <property type="entry name" value="HISTONE_LIKE"/>
    <property type="match status" value="1"/>
</dbReference>
<keyword id="KW-0226">DNA condensation</keyword>
<keyword id="KW-0238">DNA-binding</keyword>
<organism>
    <name type="scientific">Rickettsia conorii (strain ATCC VR-613 / Malish 7)</name>
    <dbReference type="NCBI Taxonomy" id="272944"/>
    <lineage>
        <taxon>Bacteria</taxon>
        <taxon>Pseudomonadati</taxon>
        <taxon>Pseudomonadota</taxon>
        <taxon>Alphaproteobacteria</taxon>
        <taxon>Rickettsiales</taxon>
        <taxon>Rickettsiaceae</taxon>
        <taxon>Rickettsieae</taxon>
        <taxon>Rickettsia</taxon>
        <taxon>spotted fever group</taxon>
    </lineage>
</organism>